<accession>P29872</accession>
<organism>
    <name type="scientific">Ctenocephalides felis</name>
    <name type="common">Cat flea</name>
    <dbReference type="NCBI Taxonomy" id="7515"/>
    <lineage>
        <taxon>Eukaryota</taxon>
        <taxon>Metazoa</taxon>
        <taxon>Ecdysozoa</taxon>
        <taxon>Arthropoda</taxon>
        <taxon>Hexapoda</taxon>
        <taxon>Insecta</taxon>
        <taxon>Pterygota</taxon>
        <taxon>Neoptera</taxon>
        <taxon>Endopterygota</taxon>
        <taxon>Siphonaptera</taxon>
        <taxon>Pulicidae</taxon>
        <taxon>Archaeopsyllinae</taxon>
        <taxon>Ctenocephalides</taxon>
    </lineage>
</organism>
<name>COX2_CTEFE</name>
<proteinExistence type="inferred from homology"/>
<protein>
    <recommendedName>
        <fullName>Cytochrome c oxidase subunit 2</fullName>
        <ecNumber>7.1.1.9</ecNumber>
    </recommendedName>
    <alternativeName>
        <fullName>Cytochrome c oxidase polypeptide II</fullName>
    </alternativeName>
</protein>
<sequence length="227" mass="26315">MNTWMNFNLQNSNSPLMEQLMFFHNHSMLIILLITILVGYIMSSLLYNKLYNRYLLESQNVEIIWTILPAFMLIFIALPSLRLLYLLDDSNSPLISLKAIGHQWYWSYEYTDFNNISFDSYMIPSNELNLNSFRLLDVDNRIILPINSQIRILITATDVLHSWTIPSLGIKIDATPGRLNQSNFMMNRPGLYFGQCSEICGANHSFMPIVIESILINSFIKWISSNS</sequence>
<feature type="chain" id="PRO_0000183559" description="Cytochrome c oxidase subunit 2">
    <location>
        <begin position="1"/>
        <end position="227"/>
    </location>
</feature>
<feature type="topological domain" description="Mitochondrial intermembrane" evidence="2">
    <location>
        <begin position="1"/>
        <end position="26"/>
    </location>
</feature>
<feature type="transmembrane region" description="Helical" evidence="2">
    <location>
        <begin position="27"/>
        <end position="48"/>
    </location>
</feature>
<feature type="topological domain" description="Mitochondrial matrix" evidence="2">
    <location>
        <begin position="49"/>
        <end position="62"/>
    </location>
</feature>
<feature type="transmembrane region" description="Helical" evidence="2">
    <location>
        <begin position="63"/>
        <end position="82"/>
    </location>
</feature>
<feature type="topological domain" description="Mitochondrial intermembrane" evidence="2">
    <location>
        <begin position="83"/>
        <end position="227"/>
    </location>
</feature>
<feature type="binding site" evidence="1">
    <location>
        <position position="161"/>
    </location>
    <ligand>
        <name>Cu cation</name>
        <dbReference type="ChEBI" id="CHEBI:23378"/>
        <label>A1</label>
    </ligand>
</feature>
<feature type="binding site" evidence="1">
    <location>
        <position position="196"/>
    </location>
    <ligand>
        <name>Cu cation</name>
        <dbReference type="ChEBI" id="CHEBI:23378"/>
        <label>A1</label>
    </ligand>
</feature>
<feature type="binding site" evidence="1">
    <location>
        <position position="196"/>
    </location>
    <ligand>
        <name>Cu cation</name>
        <dbReference type="ChEBI" id="CHEBI:23378"/>
        <label>A2</label>
    </ligand>
</feature>
<feature type="binding site" evidence="1">
    <location>
        <position position="198"/>
    </location>
    <ligand>
        <name>Cu cation</name>
        <dbReference type="ChEBI" id="CHEBI:23378"/>
        <label>A2</label>
    </ligand>
</feature>
<feature type="binding site" evidence="1">
    <location>
        <position position="198"/>
    </location>
    <ligand>
        <name>Mg(2+)</name>
        <dbReference type="ChEBI" id="CHEBI:18420"/>
        <note>ligand shared with subunit 1</note>
    </ligand>
</feature>
<feature type="binding site" evidence="1">
    <location>
        <position position="200"/>
    </location>
    <ligand>
        <name>Cu cation</name>
        <dbReference type="ChEBI" id="CHEBI:23378"/>
        <label>A1</label>
    </ligand>
</feature>
<feature type="binding site" evidence="1">
    <location>
        <position position="200"/>
    </location>
    <ligand>
        <name>Cu cation</name>
        <dbReference type="ChEBI" id="CHEBI:23378"/>
        <label>A2</label>
    </ligand>
</feature>
<feature type="binding site" evidence="1">
    <location>
        <position position="204"/>
    </location>
    <ligand>
        <name>Cu cation</name>
        <dbReference type="ChEBI" id="CHEBI:23378"/>
        <label>A2</label>
    </ligand>
</feature>
<feature type="binding site" evidence="1">
    <location>
        <position position="207"/>
    </location>
    <ligand>
        <name>Cu cation</name>
        <dbReference type="ChEBI" id="CHEBI:23378"/>
        <label>A1</label>
    </ligand>
</feature>
<reference key="1">
    <citation type="journal article" date="1992" name="Mol. Phylogenet. Evol.">
        <title>Evolution of the mitochondrial cytochrome oxidase II gene among 10 orders of insects.</title>
        <authorList>
            <person name="Liu H."/>
            <person name="Beckenbach A.T."/>
        </authorList>
    </citation>
    <scope>NUCLEOTIDE SEQUENCE [GENOMIC DNA]</scope>
</reference>
<geneLocation type="mitochondrion"/>
<evidence type="ECO:0000250" key="1">
    <source>
        <dbReference type="UniProtKB" id="P00410"/>
    </source>
</evidence>
<evidence type="ECO:0000255" key="2"/>
<evidence type="ECO:0000305" key="3"/>
<keyword id="KW-0186">Copper</keyword>
<keyword id="KW-0249">Electron transport</keyword>
<keyword id="KW-0460">Magnesium</keyword>
<keyword id="KW-0472">Membrane</keyword>
<keyword id="KW-0479">Metal-binding</keyword>
<keyword id="KW-0496">Mitochondrion</keyword>
<keyword id="KW-0999">Mitochondrion inner membrane</keyword>
<keyword id="KW-0679">Respiratory chain</keyword>
<keyword id="KW-1278">Translocase</keyword>
<keyword id="KW-0812">Transmembrane</keyword>
<keyword id="KW-1133">Transmembrane helix</keyword>
<keyword id="KW-0813">Transport</keyword>
<comment type="function">
    <text evidence="1">Component of the cytochrome c oxidase, the last enzyme in the mitochondrial electron transport chain which drives oxidative phosphorylation. The respiratory chain contains 3 multisubunit complexes succinate dehydrogenase (complex II, CII), ubiquinol-cytochrome c oxidoreductase (cytochrome b-c1 complex, complex III, CIII) and cytochrome c oxidase (complex IV, CIV), that cooperate to transfer electrons derived from NADH and succinate to molecular oxygen, creating an electrochemical gradient over the inner membrane that drives transmembrane transport and the ATP synthase. Cytochrome c oxidase is the component of the respiratory chain that catalyzes the reduction of oxygen to water. Electrons originating from reduced cytochrome c in the intermembrane space (IMS) are transferred via the dinuclear copper A center (CU(A)) of subunit 2 and heme A of subunit 1 to the active site in subunit 1, a binuclear center (BNC) formed by heme A3 and copper B (CU(B)). The BNC reduces molecular oxygen to 2 water molecules using 4 electrons from cytochrome c in the IMS and 4 protons from the mitochondrial matrix.</text>
</comment>
<comment type="catalytic activity">
    <reaction evidence="1">
        <text>4 Fe(II)-[cytochrome c] + O2 + 8 H(+)(in) = 4 Fe(III)-[cytochrome c] + 2 H2O + 4 H(+)(out)</text>
        <dbReference type="Rhea" id="RHEA:11436"/>
        <dbReference type="Rhea" id="RHEA-COMP:10350"/>
        <dbReference type="Rhea" id="RHEA-COMP:14399"/>
        <dbReference type="ChEBI" id="CHEBI:15377"/>
        <dbReference type="ChEBI" id="CHEBI:15378"/>
        <dbReference type="ChEBI" id="CHEBI:15379"/>
        <dbReference type="ChEBI" id="CHEBI:29033"/>
        <dbReference type="ChEBI" id="CHEBI:29034"/>
        <dbReference type="EC" id="7.1.1.9"/>
    </reaction>
    <physiologicalReaction direction="left-to-right" evidence="1">
        <dbReference type="Rhea" id="RHEA:11437"/>
    </physiologicalReaction>
</comment>
<comment type="cofactor">
    <cofactor evidence="1">
        <name>Cu cation</name>
        <dbReference type="ChEBI" id="CHEBI:23378"/>
    </cofactor>
    <text evidence="1">Binds a dinuclear copper A center per subunit.</text>
</comment>
<comment type="subunit">
    <text evidence="1">Component of the cytochrome c oxidase (complex IV, CIV), a multisubunit enzyme composed of a catalytic core of 3 subunits and several supernumerary subunits. The complex exists as a monomer or a dimer and forms supercomplexes (SCs) in the inner mitochondrial membrane with ubiquinol-cytochrome c oxidoreductase (cytochrome b-c1 complex, complex III, CIII).</text>
</comment>
<comment type="subcellular location">
    <subcellularLocation>
        <location evidence="1">Mitochondrion inner membrane</location>
        <topology evidence="1">Multi-pass membrane protein</topology>
    </subcellularLocation>
</comment>
<comment type="similarity">
    <text evidence="3">Belongs to the cytochrome c oxidase subunit 2 family.</text>
</comment>
<gene>
    <name type="primary">COII</name>
</gene>
<dbReference type="EC" id="7.1.1.9"/>
<dbReference type="EMBL" id="M83964">
    <property type="protein sequence ID" value="AAA31711.1"/>
    <property type="molecule type" value="Genomic_DNA"/>
</dbReference>
<dbReference type="PIR" id="C45170">
    <property type="entry name" value="C45170"/>
</dbReference>
<dbReference type="SMR" id="P29872"/>
<dbReference type="GO" id="GO:0005743">
    <property type="term" value="C:mitochondrial inner membrane"/>
    <property type="evidence" value="ECO:0007669"/>
    <property type="project" value="UniProtKB-SubCell"/>
</dbReference>
<dbReference type="GO" id="GO:0005507">
    <property type="term" value="F:copper ion binding"/>
    <property type="evidence" value="ECO:0007669"/>
    <property type="project" value="InterPro"/>
</dbReference>
<dbReference type="GO" id="GO:0004129">
    <property type="term" value="F:cytochrome-c oxidase activity"/>
    <property type="evidence" value="ECO:0007669"/>
    <property type="project" value="UniProtKB-EC"/>
</dbReference>
<dbReference type="GO" id="GO:0042773">
    <property type="term" value="P:ATP synthesis coupled electron transport"/>
    <property type="evidence" value="ECO:0007669"/>
    <property type="project" value="TreeGrafter"/>
</dbReference>
<dbReference type="CDD" id="cd13912">
    <property type="entry name" value="CcO_II_C"/>
    <property type="match status" value="1"/>
</dbReference>
<dbReference type="FunFam" id="1.10.287.90:FF:000001">
    <property type="entry name" value="Cytochrome c oxidase subunit 2"/>
    <property type="match status" value="1"/>
</dbReference>
<dbReference type="FunFam" id="2.60.40.420:FF:000001">
    <property type="entry name" value="Cytochrome c oxidase subunit 2"/>
    <property type="match status" value="1"/>
</dbReference>
<dbReference type="Gene3D" id="1.10.287.90">
    <property type="match status" value="1"/>
</dbReference>
<dbReference type="Gene3D" id="2.60.40.420">
    <property type="entry name" value="Cupredoxins - blue copper proteins"/>
    <property type="match status" value="1"/>
</dbReference>
<dbReference type="InterPro" id="IPR045187">
    <property type="entry name" value="CcO_II"/>
</dbReference>
<dbReference type="InterPro" id="IPR002429">
    <property type="entry name" value="CcO_II-like_C"/>
</dbReference>
<dbReference type="InterPro" id="IPR034210">
    <property type="entry name" value="CcO_II_C"/>
</dbReference>
<dbReference type="InterPro" id="IPR001505">
    <property type="entry name" value="Copper_CuA"/>
</dbReference>
<dbReference type="InterPro" id="IPR008972">
    <property type="entry name" value="Cupredoxin"/>
</dbReference>
<dbReference type="InterPro" id="IPR011759">
    <property type="entry name" value="Cyt_c_oxidase_su2_TM_dom"/>
</dbReference>
<dbReference type="InterPro" id="IPR036257">
    <property type="entry name" value="Cyt_c_oxidase_su2_TM_sf"/>
</dbReference>
<dbReference type="PANTHER" id="PTHR22888:SF9">
    <property type="entry name" value="CYTOCHROME C OXIDASE SUBUNIT 2"/>
    <property type="match status" value="1"/>
</dbReference>
<dbReference type="PANTHER" id="PTHR22888">
    <property type="entry name" value="CYTOCHROME C OXIDASE, SUBUNIT II"/>
    <property type="match status" value="1"/>
</dbReference>
<dbReference type="Pfam" id="PF00116">
    <property type="entry name" value="COX2"/>
    <property type="match status" value="1"/>
</dbReference>
<dbReference type="Pfam" id="PF02790">
    <property type="entry name" value="COX2_TM"/>
    <property type="match status" value="1"/>
</dbReference>
<dbReference type="PRINTS" id="PR01166">
    <property type="entry name" value="CYCOXIDASEII"/>
</dbReference>
<dbReference type="SUPFAM" id="SSF49503">
    <property type="entry name" value="Cupredoxins"/>
    <property type="match status" value="1"/>
</dbReference>
<dbReference type="SUPFAM" id="SSF81464">
    <property type="entry name" value="Cytochrome c oxidase subunit II-like, transmembrane region"/>
    <property type="match status" value="1"/>
</dbReference>
<dbReference type="PROSITE" id="PS00078">
    <property type="entry name" value="COX2"/>
    <property type="match status" value="1"/>
</dbReference>
<dbReference type="PROSITE" id="PS50857">
    <property type="entry name" value="COX2_CUA"/>
    <property type="match status" value="1"/>
</dbReference>
<dbReference type="PROSITE" id="PS50999">
    <property type="entry name" value="COX2_TM"/>
    <property type="match status" value="1"/>
</dbReference>